<accession>Q0T5C0</accession>
<sequence>MQLKRVAEAKLPTPWGDFLMVGFEELATGHDHVALVYGDISGHTPVLARVHSECLTGDALFSLRCDCGFQLEAALTQIAEEGRGILLYHRQEGRNIGLLNKIRAYALQDQGYDTVEANHQLGFAADERDFTLCADMFKLLGVNEVRLLTNNPKKVEILTEAGINIVERVPLIVGRNPNNEHYLDTKAEKMGHLLNK</sequence>
<comment type="function">
    <text evidence="1">Catalyzes the conversion of GTP to 2,5-diamino-6-ribosylamino-4(3H)-pyrimidinone 5'-phosphate (DARP), formate and pyrophosphate.</text>
</comment>
<comment type="catalytic activity">
    <reaction evidence="1">
        <text>GTP + 4 H2O = 2,5-diamino-6-hydroxy-4-(5-phosphoribosylamino)-pyrimidine + formate + 2 phosphate + 3 H(+)</text>
        <dbReference type="Rhea" id="RHEA:23704"/>
        <dbReference type="ChEBI" id="CHEBI:15377"/>
        <dbReference type="ChEBI" id="CHEBI:15378"/>
        <dbReference type="ChEBI" id="CHEBI:15740"/>
        <dbReference type="ChEBI" id="CHEBI:37565"/>
        <dbReference type="ChEBI" id="CHEBI:43474"/>
        <dbReference type="ChEBI" id="CHEBI:58614"/>
        <dbReference type="EC" id="3.5.4.25"/>
    </reaction>
</comment>
<comment type="cofactor">
    <cofactor evidence="1">
        <name>Zn(2+)</name>
        <dbReference type="ChEBI" id="CHEBI:29105"/>
    </cofactor>
    <text evidence="1">Binds 1 zinc ion per subunit.</text>
</comment>
<comment type="pathway">
    <text evidence="1">Cofactor biosynthesis; riboflavin biosynthesis; 5-amino-6-(D-ribitylamino)uracil from GTP: step 1/4.</text>
</comment>
<comment type="subunit">
    <text evidence="1">Homodimer.</text>
</comment>
<comment type="similarity">
    <text evidence="1">Belongs to the GTP cyclohydrolase II family.</text>
</comment>
<feature type="chain" id="PRO_1000040591" description="GTP cyclohydrolase-2">
    <location>
        <begin position="1"/>
        <end position="196"/>
    </location>
</feature>
<feature type="active site" description="Proton acceptor" evidence="1">
    <location>
        <position position="126"/>
    </location>
</feature>
<feature type="active site" description="Nucleophile" evidence="1">
    <location>
        <position position="128"/>
    </location>
</feature>
<feature type="binding site" evidence="1">
    <location>
        <begin position="49"/>
        <end position="53"/>
    </location>
    <ligand>
        <name>GTP</name>
        <dbReference type="ChEBI" id="CHEBI:37565"/>
    </ligand>
</feature>
<feature type="binding site" evidence="1">
    <location>
        <position position="54"/>
    </location>
    <ligand>
        <name>Zn(2+)</name>
        <dbReference type="ChEBI" id="CHEBI:29105"/>
        <note>catalytic</note>
    </ligand>
</feature>
<feature type="binding site" evidence="1">
    <location>
        <position position="65"/>
    </location>
    <ligand>
        <name>Zn(2+)</name>
        <dbReference type="ChEBI" id="CHEBI:29105"/>
        <note>catalytic</note>
    </ligand>
</feature>
<feature type="binding site" evidence="1">
    <location>
        <position position="67"/>
    </location>
    <ligand>
        <name>Zn(2+)</name>
        <dbReference type="ChEBI" id="CHEBI:29105"/>
        <note>catalytic</note>
    </ligand>
</feature>
<feature type="binding site" evidence="1">
    <location>
        <position position="70"/>
    </location>
    <ligand>
        <name>GTP</name>
        <dbReference type="ChEBI" id="CHEBI:37565"/>
    </ligand>
</feature>
<feature type="binding site" evidence="1">
    <location>
        <begin position="92"/>
        <end position="94"/>
    </location>
    <ligand>
        <name>GTP</name>
        <dbReference type="ChEBI" id="CHEBI:37565"/>
    </ligand>
</feature>
<feature type="binding site" evidence="1">
    <location>
        <position position="114"/>
    </location>
    <ligand>
        <name>GTP</name>
        <dbReference type="ChEBI" id="CHEBI:37565"/>
    </ligand>
</feature>
<feature type="binding site" evidence="1">
    <location>
        <position position="149"/>
    </location>
    <ligand>
        <name>GTP</name>
        <dbReference type="ChEBI" id="CHEBI:37565"/>
    </ligand>
</feature>
<feature type="binding site" evidence="1">
    <location>
        <position position="154"/>
    </location>
    <ligand>
        <name>GTP</name>
        <dbReference type="ChEBI" id="CHEBI:37565"/>
    </ligand>
</feature>
<evidence type="ECO:0000255" key="1">
    <source>
        <dbReference type="HAMAP-Rule" id="MF_00179"/>
    </source>
</evidence>
<gene>
    <name evidence="1" type="primary">ribA</name>
    <name type="ordered locus">SFV_1290</name>
</gene>
<dbReference type="EC" id="3.5.4.25" evidence="1"/>
<dbReference type="EMBL" id="CP000266">
    <property type="protein sequence ID" value="ABF03495.1"/>
    <property type="molecule type" value="Genomic_DNA"/>
</dbReference>
<dbReference type="RefSeq" id="WP_001176295.1">
    <property type="nucleotide sequence ID" value="NC_008258.1"/>
</dbReference>
<dbReference type="SMR" id="Q0T5C0"/>
<dbReference type="GeneID" id="86946614"/>
<dbReference type="KEGG" id="sfv:SFV_1290"/>
<dbReference type="HOGENOM" id="CLU_020273_2_1_6"/>
<dbReference type="UniPathway" id="UPA00275">
    <property type="reaction ID" value="UER00400"/>
</dbReference>
<dbReference type="Proteomes" id="UP000000659">
    <property type="component" value="Chromosome"/>
</dbReference>
<dbReference type="GO" id="GO:0005829">
    <property type="term" value="C:cytosol"/>
    <property type="evidence" value="ECO:0007669"/>
    <property type="project" value="TreeGrafter"/>
</dbReference>
<dbReference type="GO" id="GO:0005525">
    <property type="term" value="F:GTP binding"/>
    <property type="evidence" value="ECO:0007669"/>
    <property type="project" value="UniProtKB-KW"/>
</dbReference>
<dbReference type="GO" id="GO:0003935">
    <property type="term" value="F:GTP cyclohydrolase II activity"/>
    <property type="evidence" value="ECO:0007669"/>
    <property type="project" value="UniProtKB-UniRule"/>
</dbReference>
<dbReference type="GO" id="GO:0008270">
    <property type="term" value="F:zinc ion binding"/>
    <property type="evidence" value="ECO:0007669"/>
    <property type="project" value="UniProtKB-UniRule"/>
</dbReference>
<dbReference type="GO" id="GO:0009231">
    <property type="term" value="P:riboflavin biosynthetic process"/>
    <property type="evidence" value="ECO:0007669"/>
    <property type="project" value="UniProtKB-UniRule"/>
</dbReference>
<dbReference type="CDD" id="cd00641">
    <property type="entry name" value="GTP_cyclohydro2"/>
    <property type="match status" value="1"/>
</dbReference>
<dbReference type="FunFam" id="3.40.50.10990:FF:000002">
    <property type="entry name" value="GTP cyclohydrolase-2"/>
    <property type="match status" value="1"/>
</dbReference>
<dbReference type="Gene3D" id="3.40.50.10990">
    <property type="entry name" value="GTP cyclohydrolase II"/>
    <property type="match status" value="1"/>
</dbReference>
<dbReference type="HAMAP" id="MF_00179">
    <property type="entry name" value="RibA"/>
    <property type="match status" value="1"/>
</dbReference>
<dbReference type="InterPro" id="IPR032677">
    <property type="entry name" value="GTP_cyclohydro_II"/>
</dbReference>
<dbReference type="InterPro" id="IPR000926">
    <property type="entry name" value="RibA"/>
</dbReference>
<dbReference type="InterPro" id="IPR036144">
    <property type="entry name" value="RibA-like_sf"/>
</dbReference>
<dbReference type="NCBIfam" id="NF001591">
    <property type="entry name" value="PRK00393.1"/>
    <property type="match status" value="1"/>
</dbReference>
<dbReference type="NCBIfam" id="TIGR00505">
    <property type="entry name" value="ribA"/>
    <property type="match status" value="1"/>
</dbReference>
<dbReference type="PANTHER" id="PTHR21327:SF18">
    <property type="entry name" value="3,4-DIHYDROXY-2-BUTANONE 4-PHOSPHATE SYNTHASE"/>
    <property type="match status" value="1"/>
</dbReference>
<dbReference type="PANTHER" id="PTHR21327">
    <property type="entry name" value="GTP CYCLOHYDROLASE II-RELATED"/>
    <property type="match status" value="1"/>
</dbReference>
<dbReference type="Pfam" id="PF00925">
    <property type="entry name" value="GTP_cyclohydro2"/>
    <property type="match status" value="1"/>
</dbReference>
<dbReference type="SUPFAM" id="SSF142695">
    <property type="entry name" value="RibA-like"/>
    <property type="match status" value="1"/>
</dbReference>
<keyword id="KW-0342">GTP-binding</keyword>
<keyword id="KW-0378">Hydrolase</keyword>
<keyword id="KW-0479">Metal-binding</keyword>
<keyword id="KW-0547">Nucleotide-binding</keyword>
<keyword id="KW-0686">Riboflavin biosynthesis</keyword>
<keyword id="KW-0862">Zinc</keyword>
<organism>
    <name type="scientific">Shigella flexneri serotype 5b (strain 8401)</name>
    <dbReference type="NCBI Taxonomy" id="373384"/>
    <lineage>
        <taxon>Bacteria</taxon>
        <taxon>Pseudomonadati</taxon>
        <taxon>Pseudomonadota</taxon>
        <taxon>Gammaproteobacteria</taxon>
        <taxon>Enterobacterales</taxon>
        <taxon>Enterobacteriaceae</taxon>
        <taxon>Shigella</taxon>
    </lineage>
</organism>
<proteinExistence type="inferred from homology"/>
<reference key="1">
    <citation type="journal article" date="2006" name="BMC Genomics">
        <title>Complete genome sequence of Shigella flexneri 5b and comparison with Shigella flexneri 2a.</title>
        <authorList>
            <person name="Nie H."/>
            <person name="Yang F."/>
            <person name="Zhang X."/>
            <person name="Yang J."/>
            <person name="Chen L."/>
            <person name="Wang J."/>
            <person name="Xiong Z."/>
            <person name="Peng J."/>
            <person name="Sun L."/>
            <person name="Dong J."/>
            <person name="Xue Y."/>
            <person name="Xu X."/>
            <person name="Chen S."/>
            <person name="Yao Z."/>
            <person name="Shen Y."/>
            <person name="Jin Q."/>
        </authorList>
    </citation>
    <scope>NUCLEOTIDE SEQUENCE [LARGE SCALE GENOMIC DNA]</scope>
    <source>
        <strain>8401</strain>
    </source>
</reference>
<name>RIBA_SHIF8</name>
<protein>
    <recommendedName>
        <fullName evidence="1">GTP cyclohydrolase-2</fullName>
        <ecNumber evidence="1">3.5.4.25</ecNumber>
    </recommendedName>
    <alternativeName>
        <fullName evidence="1">GTP cyclohydrolase II</fullName>
    </alternativeName>
</protein>